<protein>
    <recommendedName>
        <fullName evidence="1">Glycine--tRNA ligase</fullName>
        <ecNumber evidence="1">6.1.1.14</ecNumber>
    </recommendedName>
    <alternativeName>
        <fullName evidence="1">Glycyl-tRNA synthetase</fullName>
        <shortName evidence="1">GlyRS</shortName>
    </alternativeName>
</protein>
<reference key="1">
    <citation type="journal article" date="1998" name="Science">
        <title>Complete genome sequence of Treponema pallidum, the syphilis spirochete.</title>
        <authorList>
            <person name="Fraser C.M."/>
            <person name="Norris S.J."/>
            <person name="Weinstock G.M."/>
            <person name="White O."/>
            <person name="Sutton G.G."/>
            <person name="Dodson R.J."/>
            <person name="Gwinn M.L."/>
            <person name="Hickey E.K."/>
            <person name="Clayton R.A."/>
            <person name="Ketchum K.A."/>
            <person name="Sodergren E."/>
            <person name="Hardham J.M."/>
            <person name="McLeod M.P."/>
            <person name="Salzberg S.L."/>
            <person name="Peterson J.D."/>
            <person name="Khalak H.G."/>
            <person name="Richardson D.L."/>
            <person name="Howell J.K."/>
            <person name="Chidambaram M."/>
            <person name="Utterback T.R."/>
            <person name="McDonald L.A."/>
            <person name="Artiach P."/>
            <person name="Bowman C."/>
            <person name="Cotton M.D."/>
            <person name="Fujii C."/>
            <person name="Garland S.A."/>
            <person name="Hatch B."/>
            <person name="Horst K."/>
            <person name="Roberts K.M."/>
            <person name="Sandusky M."/>
            <person name="Weidman J.F."/>
            <person name="Smith H.O."/>
            <person name="Venter J.C."/>
        </authorList>
    </citation>
    <scope>NUCLEOTIDE SEQUENCE [LARGE SCALE GENOMIC DNA]</scope>
    <source>
        <strain>Nichols</strain>
    </source>
</reference>
<keyword id="KW-0030">Aminoacyl-tRNA synthetase</keyword>
<keyword id="KW-0067">ATP-binding</keyword>
<keyword id="KW-0963">Cytoplasm</keyword>
<keyword id="KW-0436">Ligase</keyword>
<keyword id="KW-0547">Nucleotide-binding</keyword>
<keyword id="KW-0648">Protein biosynthesis</keyword>
<keyword id="KW-1185">Reference proteome</keyword>
<sequence length="462" mass="52677">MEKIVGLCKRRGFVFPSSEIYGGQGGVWDYGPMGIALKNNIAHAWWQDMTRLHDHIVGLDAAILMHPNVWRTSGHVDHFSDPLVDCTVCKSRFRADQVAVPSAGGPCPQCGGALTGVRNFNLMFSTHMGPTDERASLLYLRPETAQGIYVNYKNVLQTTRLKVPFGIAQIGKAFRNEIVTKNFIFRTCEFEQMEMQFFVRPAEDTHWFEYWCAQRWAFYQKYGVRMNHMRWRTHAAHELAHYARAACDIEYAFPMGFRELEGVHNRGDFDLTRHAQHSGKDLCYVDPDPNLDAAARRYVPCVVETSAGLTRCVLMFLCDAYTEEYVQAPNVAFSETTQTADQEGAARTGEMRIVLRLHPALSPTTVAFLPLVKKDGLVDLARAVRDELREDFACDFDAAGAIGKRYRRQDEVGTPFCVTVDYQSKEDDTVTVRLRDSMAQRRVSRAFLAEFLRTEIKHYRRP</sequence>
<gene>
    <name evidence="1" type="primary">glyQS</name>
    <name type="synonym">glyS</name>
    <name type="ordered locus">TP_0672</name>
</gene>
<evidence type="ECO:0000255" key="1">
    <source>
        <dbReference type="HAMAP-Rule" id="MF_00253"/>
    </source>
</evidence>
<proteinExistence type="inferred from homology"/>
<accession>O83678</accession>
<dbReference type="EC" id="6.1.1.14" evidence="1"/>
<dbReference type="EMBL" id="AE000520">
    <property type="protein sequence ID" value="AAC26570.1"/>
    <property type="molecule type" value="Genomic_DNA"/>
</dbReference>
<dbReference type="PIR" id="C71296">
    <property type="entry name" value="C71296"/>
</dbReference>
<dbReference type="SMR" id="O83678"/>
<dbReference type="STRING" id="243276.TP_0672"/>
<dbReference type="EnsemblBacteria" id="AAC26570">
    <property type="protein sequence ID" value="AAC26570"/>
    <property type="gene ID" value="TP_0672"/>
</dbReference>
<dbReference type="KEGG" id="tpa:TP_0672"/>
<dbReference type="KEGG" id="tpw:TPANIC_0672"/>
<dbReference type="eggNOG" id="COG0423">
    <property type="taxonomic scope" value="Bacteria"/>
</dbReference>
<dbReference type="HOGENOM" id="CLU_015515_2_1_12"/>
<dbReference type="Proteomes" id="UP000000811">
    <property type="component" value="Chromosome"/>
</dbReference>
<dbReference type="GO" id="GO:0005737">
    <property type="term" value="C:cytoplasm"/>
    <property type="evidence" value="ECO:0007669"/>
    <property type="project" value="UniProtKB-SubCell"/>
</dbReference>
<dbReference type="GO" id="GO:0005524">
    <property type="term" value="F:ATP binding"/>
    <property type="evidence" value="ECO:0007669"/>
    <property type="project" value="UniProtKB-UniRule"/>
</dbReference>
<dbReference type="GO" id="GO:0004820">
    <property type="term" value="F:glycine-tRNA ligase activity"/>
    <property type="evidence" value="ECO:0000250"/>
    <property type="project" value="UniProtKB"/>
</dbReference>
<dbReference type="GO" id="GO:0046983">
    <property type="term" value="F:protein dimerization activity"/>
    <property type="evidence" value="ECO:0000250"/>
    <property type="project" value="UniProtKB"/>
</dbReference>
<dbReference type="GO" id="GO:0006426">
    <property type="term" value="P:glycyl-tRNA aminoacylation"/>
    <property type="evidence" value="ECO:0007669"/>
    <property type="project" value="UniProtKB-UniRule"/>
</dbReference>
<dbReference type="CDD" id="cd00774">
    <property type="entry name" value="GlyRS-like_core"/>
    <property type="match status" value="1"/>
</dbReference>
<dbReference type="CDD" id="cd00858">
    <property type="entry name" value="GlyRS_anticodon"/>
    <property type="match status" value="1"/>
</dbReference>
<dbReference type="FunFam" id="3.30.930.10:FF:000014">
    <property type="entry name" value="Glycine--tRNA ligase"/>
    <property type="match status" value="1"/>
</dbReference>
<dbReference type="FunFam" id="3.40.50.800:FF:000002">
    <property type="entry name" value="Glycine--tRNA ligase"/>
    <property type="match status" value="1"/>
</dbReference>
<dbReference type="Gene3D" id="3.40.50.800">
    <property type="entry name" value="Anticodon-binding domain"/>
    <property type="match status" value="1"/>
</dbReference>
<dbReference type="Gene3D" id="3.30.930.10">
    <property type="entry name" value="Bira Bifunctional Protein, Domain 2"/>
    <property type="match status" value="1"/>
</dbReference>
<dbReference type="HAMAP" id="MF_00253_B">
    <property type="entry name" value="Gly_tRNA_synth_B"/>
    <property type="match status" value="1"/>
</dbReference>
<dbReference type="InterPro" id="IPR002314">
    <property type="entry name" value="aa-tRNA-synt_IIb"/>
</dbReference>
<dbReference type="InterPro" id="IPR006195">
    <property type="entry name" value="aa-tRNA-synth_II"/>
</dbReference>
<dbReference type="InterPro" id="IPR045864">
    <property type="entry name" value="aa-tRNA-synth_II/BPL/LPL"/>
</dbReference>
<dbReference type="InterPro" id="IPR004154">
    <property type="entry name" value="Anticodon-bd"/>
</dbReference>
<dbReference type="InterPro" id="IPR036621">
    <property type="entry name" value="Anticodon-bd_dom_sf"/>
</dbReference>
<dbReference type="InterPro" id="IPR027031">
    <property type="entry name" value="Gly-tRNA_synthase/POLG2"/>
</dbReference>
<dbReference type="InterPro" id="IPR022961">
    <property type="entry name" value="Gly_tRNA_ligase_bac"/>
</dbReference>
<dbReference type="InterPro" id="IPR033731">
    <property type="entry name" value="GlyRS-like_core"/>
</dbReference>
<dbReference type="InterPro" id="IPR002315">
    <property type="entry name" value="tRNA-synt_gly"/>
</dbReference>
<dbReference type="NCBIfam" id="TIGR00389">
    <property type="entry name" value="glyS_dimeric"/>
    <property type="match status" value="1"/>
</dbReference>
<dbReference type="NCBIfam" id="NF003211">
    <property type="entry name" value="PRK04173.1"/>
    <property type="match status" value="1"/>
</dbReference>
<dbReference type="PANTHER" id="PTHR10745:SF8">
    <property type="entry name" value="DNA POLYMERASE SUBUNIT GAMMA-2, MITOCHONDRIAL"/>
    <property type="match status" value="1"/>
</dbReference>
<dbReference type="PANTHER" id="PTHR10745">
    <property type="entry name" value="GLYCYL-TRNA SYNTHETASE/DNA POLYMERASE SUBUNIT GAMMA-2"/>
    <property type="match status" value="1"/>
</dbReference>
<dbReference type="Pfam" id="PF03129">
    <property type="entry name" value="HGTP_anticodon"/>
    <property type="match status" value="1"/>
</dbReference>
<dbReference type="Pfam" id="PF00587">
    <property type="entry name" value="tRNA-synt_2b"/>
    <property type="match status" value="1"/>
</dbReference>
<dbReference type="PRINTS" id="PR01043">
    <property type="entry name" value="TRNASYNTHGLY"/>
</dbReference>
<dbReference type="SUPFAM" id="SSF52954">
    <property type="entry name" value="Class II aaRS ABD-related"/>
    <property type="match status" value="1"/>
</dbReference>
<dbReference type="SUPFAM" id="SSF55681">
    <property type="entry name" value="Class II aaRS and biotin synthetases"/>
    <property type="match status" value="1"/>
</dbReference>
<dbReference type="PROSITE" id="PS50862">
    <property type="entry name" value="AA_TRNA_LIGASE_II"/>
    <property type="match status" value="1"/>
</dbReference>
<comment type="function">
    <text evidence="1">Catalyzes the attachment of glycine to tRNA(Gly).</text>
</comment>
<comment type="catalytic activity">
    <reaction evidence="1">
        <text>tRNA(Gly) + glycine + ATP = glycyl-tRNA(Gly) + AMP + diphosphate</text>
        <dbReference type="Rhea" id="RHEA:16013"/>
        <dbReference type="Rhea" id="RHEA-COMP:9664"/>
        <dbReference type="Rhea" id="RHEA-COMP:9683"/>
        <dbReference type="ChEBI" id="CHEBI:30616"/>
        <dbReference type="ChEBI" id="CHEBI:33019"/>
        <dbReference type="ChEBI" id="CHEBI:57305"/>
        <dbReference type="ChEBI" id="CHEBI:78442"/>
        <dbReference type="ChEBI" id="CHEBI:78522"/>
        <dbReference type="ChEBI" id="CHEBI:456215"/>
        <dbReference type="EC" id="6.1.1.14"/>
    </reaction>
</comment>
<comment type="subunit">
    <text evidence="1">Homodimer.</text>
</comment>
<comment type="subcellular location">
    <subcellularLocation>
        <location evidence="1">Cytoplasm</location>
    </subcellularLocation>
</comment>
<comment type="similarity">
    <text evidence="1">Belongs to the class-II aminoacyl-tRNA synthetase family.</text>
</comment>
<organism>
    <name type="scientific">Treponema pallidum (strain Nichols)</name>
    <dbReference type="NCBI Taxonomy" id="243276"/>
    <lineage>
        <taxon>Bacteria</taxon>
        <taxon>Pseudomonadati</taxon>
        <taxon>Spirochaetota</taxon>
        <taxon>Spirochaetia</taxon>
        <taxon>Spirochaetales</taxon>
        <taxon>Treponemataceae</taxon>
        <taxon>Treponema</taxon>
    </lineage>
</organism>
<name>SYG_TREPA</name>
<feature type="chain" id="PRO_0000072986" description="Glycine--tRNA ligase">
    <location>
        <begin position="1"/>
        <end position="462"/>
    </location>
</feature>
<feature type="binding site" evidence="1">
    <location>
        <position position="94"/>
    </location>
    <ligand>
        <name>substrate</name>
    </ligand>
</feature>
<feature type="binding site" evidence="1">
    <location>
        <position position="143"/>
    </location>
    <ligand>
        <name>substrate</name>
    </ligand>
</feature>
<feature type="binding site" evidence="1">
    <location>
        <begin position="175"/>
        <end position="177"/>
    </location>
    <ligand>
        <name>ATP</name>
        <dbReference type="ChEBI" id="CHEBI:30616"/>
    </ligand>
</feature>
<feature type="binding site" evidence="1">
    <location>
        <begin position="185"/>
        <end position="190"/>
    </location>
    <ligand>
        <name>ATP</name>
        <dbReference type="ChEBI" id="CHEBI:30616"/>
    </ligand>
</feature>
<feature type="binding site" evidence="1">
    <location>
        <begin position="190"/>
        <end position="194"/>
    </location>
    <ligand>
        <name>substrate</name>
    </ligand>
</feature>
<feature type="binding site" evidence="1">
    <location>
        <begin position="259"/>
        <end position="260"/>
    </location>
    <ligand>
        <name>ATP</name>
        <dbReference type="ChEBI" id="CHEBI:30616"/>
    </ligand>
</feature>
<feature type="binding site" evidence="1">
    <location>
        <begin position="304"/>
        <end position="308"/>
    </location>
    <ligand>
        <name>substrate</name>
    </ligand>
</feature>
<feature type="binding site" evidence="1">
    <location>
        <begin position="308"/>
        <end position="311"/>
    </location>
    <ligand>
        <name>ATP</name>
        <dbReference type="ChEBI" id="CHEBI:30616"/>
    </ligand>
</feature>